<reference evidence="7" key="1">
    <citation type="journal article" date="2014" name="BMC Biol.">
        <title>A comprehensive evaluation of rodent malaria parasite genomes and gene expression.</title>
        <authorList>
            <person name="Otto T.D."/>
            <person name="Bohme U."/>
            <person name="Jackson A.P."/>
            <person name="Hunt M."/>
            <person name="Franke-Fayard B."/>
            <person name="Hoeijmakers W.A."/>
            <person name="Religa A.A."/>
            <person name="Robertson L."/>
            <person name="Sanders M."/>
            <person name="Ogun S.A."/>
            <person name="Cunningham D."/>
            <person name="Erhart A."/>
            <person name="Billker O."/>
            <person name="Khan S.M."/>
            <person name="Stunnenberg H.G."/>
            <person name="Langhorne J."/>
            <person name="Holder A.A."/>
            <person name="Waters A.P."/>
            <person name="Newbold C.I."/>
            <person name="Pain A."/>
            <person name="Berriman M."/>
            <person name="Janse C.J."/>
        </authorList>
    </citation>
    <scope>NUCLEOTIDE SEQUENCE [LARGE SCALE GENOMIC DNA]</scope>
    <source>
        <strain evidence="7">ANKA</strain>
    </source>
</reference>
<reference key="2">
    <citation type="journal article" date="2001" name="Cell">
        <title>A central role for P48/45 in malaria parasite male gamete fertility.</title>
        <authorList>
            <person name="van Dijk M.R."/>
            <person name="Janse C.J."/>
            <person name="Thompson J."/>
            <person name="Waters A.P."/>
            <person name="Braks J.A."/>
            <person name="Dodemont H.J."/>
            <person name="Stunnenberg H.G."/>
            <person name="van Gemert G.J."/>
            <person name="Sauerwein R.W."/>
            <person name="Eling W."/>
        </authorList>
    </citation>
    <scope>FUNCTION</scope>
    <scope>DISRUPTION PHENOTYPE</scope>
    <scope>SUBCELLULAR LOCATION</scope>
    <scope>DEVELOPMENTAL STAGE</scope>
    <source>
        <strain>ANKA</strain>
    </source>
</reference>
<reference key="3">
    <citation type="journal article" date="2010" name="PLoS Pathog.">
        <title>Three members of the 6-cys protein family of Plasmodium play a role in gamete fertility.</title>
        <authorList>
            <person name="van Dijk M.R."/>
            <person name="van Schaijk B.C."/>
            <person name="Khan S.M."/>
            <person name="van Dooren M.W."/>
            <person name="Ramesar J."/>
            <person name="Kaczanowski S."/>
            <person name="van Gemert G.J."/>
            <person name="Kroeze H."/>
            <person name="Stunnenberg H.G."/>
            <person name="Eling W.M."/>
            <person name="Sauerwein R.W."/>
            <person name="Waters A.P."/>
            <person name="Janse C.J."/>
        </authorList>
    </citation>
    <scope>FUNCTION</scope>
    <source>
        <strain>ANKA</strain>
    </source>
</reference>
<proteinExistence type="evidence at transcript level"/>
<comment type="function">
    <text evidence="4 5">Gametocyte surface protein required for male fertility.</text>
</comment>
<comment type="subunit">
    <text evidence="1">Heterodimer; heterodimerizes with PF230.</text>
</comment>
<comment type="subcellular location">
    <subcellularLocation>
        <location evidence="4">Cell surface</location>
    </subcellularLocation>
    <subcellularLocation>
        <location evidence="4">Cell membrane</location>
        <topology evidence="4">Lipid-anchor</topology>
        <topology evidence="4">GPI-anchor</topology>
    </subcellularLocation>
    <text evidence="4">Present on the surface of male and female gametocytes.</text>
</comment>
<comment type="developmental stage">
    <text evidence="4">Specifically expressed in sporogonic (macrogametes) stages of parasites.</text>
</comment>
<comment type="disruption phenotype">
    <text evidence="4">Male gametes fail to attach at fertile female gametes.</text>
</comment>
<keyword id="KW-1003">Cell membrane</keyword>
<keyword id="KW-1015">Disulfide bond</keyword>
<keyword id="KW-0325">Glycoprotein</keyword>
<keyword id="KW-0336">GPI-anchor</keyword>
<keyword id="KW-0449">Lipoprotein</keyword>
<keyword id="KW-0461">Malaria</keyword>
<keyword id="KW-0472">Membrane</keyword>
<keyword id="KW-1185">Reference proteome</keyword>
<keyword id="KW-0677">Repeat</keyword>
<keyword id="KW-0732">Signal</keyword>
<organism>
    <name type="scientific">Plasmodium berghei (strain Anka)</name>
    <dbReference type="NCBI Taxonomy" id="5823"/>
    <lineage>
        <taxon>Eukaryota</taxon>
        <taxon>Sar</taxon>
        <taxon>Alveolata</taxon>
        <taxon>Apicomplexa</taxon>
        <taxon>Aconoidasida</taxon>
        <taxon>Haemosporida</taxon>
        <taxon>Plasmodiidae</taxon>
        <taxon>Plasmodium</taxon>
        <taxon>Plasmodium (Vinckeia)</taxon>
    </lineage>
</organism>
<evidence type="ECO:0000250" key="1">
    <source>
        <dbReference type="UniProtKB" id="Q8I6T1"/>
    </source>
</evidence>
<evidence type="ECO:0000255" key="2"/>
<evidence type="ECO:0000255" key="3">
    <source>
        <dbReference type="PROSITE-ProRule" id="PRU01038"/>
    </source>
</evidence>
<evidence type="ECO:0000269" key="4">
    <source>
    </source>
</evidence>
<evidence type="ECO:0000269" key="5">
    <source>
    </source>
</evidence>
<evidence type="ECO:0000312" key="6">
    <source>
        <dbReference type="EMBL" id="VUC57983.1"/>
    </source>
</evidence>
<evidence type="ECO:0000312" key="7">
    <source>
        <dbReference type="Proteomes" id="UP000074855"/>
    </source>
</evidence>
<accession>Q4YSU6</accession>
<accession>A0A509AQM1</accession>
<protein>
    <recommendedName>
        <fullName>Gametocyte surface protein P45/48</fullName>
    </recommendedName>
</protein>
<gene>
    <name type="primary">PB45/48</name>
    <name type="ORF">PB001525.02.0</name>
    <name evidence="6" type="ORF">PBANKA_1359600</name>
</gene>
<name>P4548_PLABA</name>
<feature type="signal peptide" evidence="2">
    <location>
        <begin position="1"/>
        <end position="30"/>
    </location>
</feature>
<feature type="chain" id="PRO_0000423562" description="Gametocyte surface protein P45/48">
    <location>
        <begin position="31"/>
        <end position="433"/>
    </location>
</feature>
<feature type="propeptide" id="PRO_0000423563" description="Removed in mature form" evidence="2">
    <location>
        <begin position="434"/>
        <end position="455"/>
    </location>
</feature>
<feature type="domain" description="6-Cys 1" evidence="3">
    <location>
        <begin position="48"/>
        <end position="186"/>
    </location>
</feature>
<feature type="domain" description="6-Cys 2" evidence="3">
    <location>
        <begin position="302"/>
        <end position="433"/>
    </location>
</feature>
<feature type="lipid moiety-binding region" description="GPI-anchor amidated glycine" evidence="2">
    <location>
        <position position="433"/>
    </location>
</feature>
<feature type="glycosylation site" description="N-linked (GlcNAc...) asparagine" evidence="2">
    <location>
        <position position="135"/>
    </location>
</feature>
<feature type="glycosylation site" description="N-linked (GlcNAc...) asparagine" evidence="2">
    <location>
        <position position="194"/>
    </location>
</feature>
<feature type="glycosylation site" description="N-linked (GlcNAc...) asparagine" evidence="2">
    <location>
        <position position="275"/>
    </location>
</feature>
<feature type="glycosylation site" description="N-linked (GlcNAc...) asparagine" evidence="2">
    <location>
        <position position="307"/>
    </location>
</feature>
<feature type="disulfide bond" evidence="3">
    <location>
        <begin position="52"/>
        <end position="74"/>
    </location>
</feature>
<feature type="disulfide bond" evidence="3">
    <location>
        <begin position="106"/>
        <end position="160"/>
    </location>
</feature>
<feature type="disulfide bond" evidence="3">
    <location>
        <begin position="306"/>
        <end position="334"/>
    </location>
</feature>
<feature type="disulfide bond" evidence="3">
    <location>
        <begin position="351"/>
        <end position="419"/>
    </location>
</feature>
<feature type="disulfide bond" evidence="3">
    <location>
        <begin position="359"/>
        <end position="417"/>
    </location>
</feature>
<dbReference type="EMBL" id="LK023128">
    <property type="protein sequence ID" value="VUC57983.1"/>
    <property type="molecule type" value="Genomic_DNA"/>
</dbReference>
<dbReference type="RefSeq" id="XP_679694.1">
    <property type="nucleotide sequence ID" value="XM_674602.1"/>
</dbReference>
<dbReference type="SMR" id="Q4YSU6"/>
<dbReference type="GlyCosmos" id="Q4YSU6">
    <property type="glycosylation" value="4 sites, No reported glycans"/>
</dbReference>
<dbReference type="VEuPathDB" id="PlasmoDB:PBANKA_1359600"/>
<dbReference type="eggNOG" id="ENOG502QX5B">
    <property type="taxonomic scope" value="Eukaryota"/>
</dbReference>
<dbReference type="HOGENOM" id="CLU_611777_0_0_1"/>
<dbReference type="InParanoid" id="A0A509AQM1"/>
<dbReference type="OMA" id="PECFFQV"/>
<dbReference type="Proteomes" id="UP000074855">
    <property type="component" value="Chromosome 13"/>
</dbReference>
<dbReference type="GO" id="GO:0009986">
    <property type="term" value="C:cell surface"/>
    <property type="evidence" value="ECO:0007669"/>
    <property type="project" value="UniProtKB-SubCell"/>
</dbReference>
<dbReference type="GO" id="GO:0005886">
    <property type="term" value="C:plasma membrane"/>
    <property type="evidence" value="ECO:0007669"/>
    <property type="project" value="UniProtKB-SubCell"/>
</dbReference>
<dbReference type="GO" id="GO:0098552">
    <property type="term" value="C:side of membrane"/>
    <property type="evidence" value="ECO:0007669"/>
    <property type="project" value="UniProtKB-KW"/>
</dbReference>
<dbReference type="Gene3D" id="2.60.40.2860">
    <property type="match status" value="2"/>
</dbReference>
<dbReference type="InterPro" id="IPR010884">
    <property type="entry name" value="6_CYS_dom"/>
</dbReference>
<dbReference type="InterPro" id="IPR038160">
    <property type="entry name" value="6_CYS_dom_sf"/>
</dbReference>
<dbReference type="Pfam" id="PF07422">
    <property type="entry name" value="s48_45"/>
    <property type="match status" value="2"/>
</dbReference>
<dbReference type="SMART" id="SM00970">
    <property type="entry name" value="s48_45"/>
    <property type="match status" value="2"/>
</dbReference>
<dbReference type="PROSITE" id="PS51701">
    <property type="entry name" value="6_CYS"/>
    <property type="match status" value="2"/>
</dbReference>
<sequence length="455" mass="52907">MLYFFGNSRFFLFFFYFFFYFVLVIKSSVGKNEYVSPDELNIKTSGFLGYKCDFSTEGIHNLEPDIVERRSVICSINSYFIYDKIKLIIPKQDDPKSKFKLLPENCFAKVYSDIEGKTEIPIEQTGLIEYTLEENDTNQDYSERIIQISPFNNKDIEFYCICDNTEQVISHIDGRSALVHVTVLKYPHKIVSVNLTDQKYPYLFDAYNKNDFINYKLEIGLKEGELLVLACKQIDNKCFQKNDESKNGDLYKTNKIIYHKDFAIFKAPIYVKSNNATAECKCKIDEANIYTLVVKPDYDEKVIYGCNFSKDLSFRTFTNNMNLLKYNENTNINCNVEISQPFYDHLIGISCPGTIIPDCFFQIYKPLTNELKSSEITYLDSQLNIGNIEYYEDIHGNNEIRIFSIVGAIPQSASFTCMCKMDKITGFMNIKIGSAYYAFLSKLFIIFIPLFFMWL</sequence>